<sequence length="163" mass="17374">MSKGLLLLLLLSMGGTWASKEPLRPRCRPINATLAVEKEGCPVCITVNTTICAGYCPTMTRVLQGVLPALPQVVCNYRDVRFESIRLPGCPRGVNPVVSYAVALSCQCALCRRSTTDCGGPKDHPLTCDDPRFQASSSSKAPPPSLPSPSRLPGPSDTPILPQ</sequence>
<accession>Q6NT52</accession>
<accession>B9ZVM5</accession>
<accession>H9KV56</accession>
<evidence type="ECO:0000250" key="1"/>
<evidence type="ECO:0000255" key="2"/>
<evidence type="ECO:0000256" key="3">
    <source>
        <dbReference type="SAM" id="MobiDB-lite"/>
    </source>
</evidence>
<evidence type="ECO:0000269" key="4">
    <source>
    </source>
</evidence>
<evidence type="ECO:0000269" key="5">
    <source>
    </source>
</evidence>
<evidence type="ECO:0000269" key="6">
    <source>
    </source>
</evidence>
<evidence type="ECO:0000305" key="7"/>
<protein>
    <recommendedName>
        <fullName>Choriogonadotropin subunit beta variant 2</fullName>
    </recommendedName>
</protein>
<keyword id="KW-1015">Disulfide bond</keyword>
<keyword id="KW-0325">Glycoprotein</keyword>
<keyword id="KW-0372">Hormone</keyword>
<keyword id="KW-1185">Reference proteome</keyword>
<keyword id="KW-0964">Secreted</keyword>
<keyword id="KW-0732">Signal</keyword>
<proteinExistence type="evidence at transcript level"/>
<dbReference type="EMBL" id="AC008687">
    <property type="status" value="NOT_ANNOTATED_CDS"/>
    <property type="molecule type" value="Genomic_DNA"/>
</dbReference>
<dbReference type="EMBL" id="BC069367">
    <property type="protein sequence ID" value="AAH69367.2"/>
    <property type="status" value="ALT_SEQ"/>
    <property type="molecule type" value="mRNA"/>
</dbReference>
<dbReference type="CCDS" id="CCDS12750.2"/>
<dbReference type="RefSeq" id="NP_203696.2">
    <property type="nucleotide sequence ID" value="NM_033378.2"/>
</dbReference>
<dbReference type="SMR" id="Q6NT52"/>
<dbReference type="FunCoup" id="Q6NT52">
    <property type="interactions" value="110"/>
</dbReference>
<dbReference type="IntAct" id="Q6NT52">
    <property type="interactions" value="16"/>
</dbReference>
<dbReference type="MINT" id="Q6NT52"/>
<dbReference type="STRING" id="9606.ENSP00000352295"/>
<dbReference type="GlyCosmos" id="Q6NT52">
    <property type="glycosylation" value="2 sites, No reported glycans"/>
</dbReference>
<dbReference type="GlyGen" id="Q6NT52">
    <property type="glycosylation" value="2 sites"/>
</dbReference>
<dbReference type="iPTMnet" id="Q6NT52"/>
<dbReference type="PhosphoSitePlus" id="Q6NT52"/>
<dbReference type="BioMuta" id="CGB2"/>
<dbReference type="DMDM" id="281185508"/>
<dbReference type="jPOST" id="Q6NT52"/>
<dbReference type="MassIVE" id="Q6NT52"/>
<dbReference type="PaxDb" id="9606-ENSP00000352295"/>
<dbReference type="PeptideAtlas" id="Q6NT52"/>
<dbReference type="ProteomicsDB" id="46213"/>
<dbReference type="Antibodypedia" id="31875">
    <property type="antibodies" value="83 antibodies from 11 providers"/>
</dbReference>
<dbReference type="DNASU" id="114336"/>
<dbReference type="Ensembl" id="ENST00000359342.7">
    <property type="protein sequence ID" value="ENSP00000352295.6"/>
    <property type="gene ID" value="ENSG00000104818.15"/>
</dbReference>
<dbReference type="GeneID" id="114336"/>
<dbReference type="KEGG" id="hsa:114336"/>
<dbReference type="MANE-Select" id="ENST00000359342.7">
    <property type="protein sequence ID" value="ENSP00000352295.6"/>
    <property type="RefSeq nucleotide sequence ID" value="NM_033378.2"/>
    <property type="RefSeq protein sequence ID" value="NP_203696.2"/>
</dbReference>
<dbReference type="AGR" id="HGNC:16722"/>
<dbReference type="CTD" id="114336"/>
<dbReference type="DisGeNET" id="114336"/>
<dbReference type="GeneCards" id="CGB2"/>
<dbReference type="HGNC" id="HGNC:16722">
    <property type="gene designation" value="CGB2"/>
</dbReference>
<dbReference type="HPA" id="ENSG00000104818">
    <property type="expression patterns" value="Tissue enhanced (testis)"/>
</dbReference>
<dbReference type="MIM" id="608824">
    <property type="type" value="gene"/>
</dbReference>
<dbReference type="neXtProt" id="NX_Q6NT52"/>
<dbReference type="OpenTargets" id="ENSG00000104818"/>
<dbReference type="VEuPathDB" id="HostDB:ENSG00000104818"/>
<dbReference type="eggNOG" id="ENOG502S49V">
    <property type="taxonomic scope" value="Eukaryota"/>
</dbReference>
<dbReference type="GeneTree" id="ENSGT00940000163162"/>
<dbReference type="InParanoid" id="Q6NT52"/>
<dbReference type="OMA" id="EACPFCI"/>
<dbReference type="OrthoDB" id="9525526at2759"/>
<dbReference type="PAN-GO" id="Q6NT52">
    <property type="GO annotations" value="3 GO annotations based on evolutionary models"/>
</dbReference>
<dbReference type="PhylomeDB" id="Q6NT52"/>
<dbReference type="TreeFam" id="TF332940"/>
<dbReference type="PathwayCommons" id="Q6NT52"/>
<dbReference type="SignaLink" id="Q6NT52"/>
<dbReference type="BioGRID-ORCS" id="114336">
    <property type="hits" value="27 hits in 656 CRISPR screens"/>
</dbReference>
<dbReference type="GenomeRNAi" id="114336"/>
<dbReference type="Pharos" id="Q6NT52">
    <property type="development level" value="Tdark"/>
</dbReference>
<dbReference type="PRO" id="PR:Q6NT52"/>
<dbReference type="Proteomes" id="UP000005640">
    <property type="component" value="Chromosome 19"/>
</dbReference>
<dbReference type="RNAct" id="Q6NT52">
    <property type="molecule type" value="protein"/>
</dbReference>
<dbReference type="Bgee" id="ENSG00000104818">
    <property type="expression patterns" value="Expressed in primordial germ cell in gonad and 31 other cell types or tissues"/>
</dbReference>
<dbReference type="ExpressionAtlas" id="Q6NT52">
    <property type="expression patterns" value="baseline and differential"/>
</dbReference>
<dbReference type="GO" id="GO:0005737">
    <property type="term" value="C:cytoplasm"/>
    <property type="evidence" value="ECO:0000318"/>
    <property type="project" value="GO_Central"/>
</dbReference>
<dbReference type="GO" id="GO:0005615">
    <property type="term" value="C:extracellular space"/>
    <property type="evidence" value="ECO:0000318"/>
    <property type="project" value="GO_Central"/>
</dbReference>
<dbReference type="GO" id="GO:0005179">
    <property type="term" value="F:hormone activity"/>
    <property type="evidence" value="ECO:0000315"/>
    <property type="project" value="AgBase"/>
</dbReference>
<dbReference type="GO" id="GO:0007186">
    <property type="term" value="P:G protein-coupled receptor signaling pathway"/>
    <property type="evidence" value="ECO:0000318"/>
    <property type="project" value="GO_Central"/>
</dbReference>
<dbReference type="CDD" id="cd00069">
    <property type="entry name" value="GHB_like"/>
    <property type="match status" value="1"/>
</dbReference>
<dbReference type="FunFam" id="2.10.90.10:FF:000007">
    <property type="entry name" value="Luteinizing hormone beta subunit"/>
    <property type="match status" value="1"/>
</dbReference>
<dbReference type="Gene3D" id="2.10.90.10">
    <property type="entry name" value="Cystine-knot cytokines"/>
    <property type="match status" value="1"/>
</dbReference>
<dbReference type="InterPro" id="IPR029034">
    <property type="entry name" value="Cystine-knot_cytokine"/>
</dbReference>
<dbReference type="InterPro" id="IPR006208">
    <property type="entry name" value="Glyco_hormone_CN"/>
</dbReference>
<dbReference type="InterPro" id="IPR001545">
    <property type="entry name" value="Gonadotropin_bsu"/>
</dbReference>
<dbReference type="InterPro" id="IPR018245">
    <property type="entry name" value="Gonadotropin_bsu_CS"/>
</dbReference>
<dbReference type="PANTHER" id="PTHR11515:SF25">
    <property type="entry name" value="CHORIOGONADOTROPIN SUBUNIT BETA 3-RELATED"/>
    <property type="match status" value="1"/>
</dbReference>
<dbReference type="PANTHER" id="PTHR11515">
    <property type="entry name" value="GLYCOPROTEIN HORMONE BETA CHAIN"/>
    <property type="match status" value="1"/>
</dbReference>
<dbReference type="Pfam" id="PF00007">
    <property type="entry name" value="Cys_knot"/>
    <property type="match status" value="1"/>
</dbReference>
<dbReference type="SMART" id="SM00068">
    <property type="entry name" value="GHB"/>
    <property type="match status" value="1"/>
</dbReference>
<dbReference type="SUPFAM" id="SSF57501">
    <property type="entry name" value="Cystine-knot cytokines"/>
    <property type="match status" value="1"/>
</dbReference>
<dbReference type="PROSITE" id="PS00261">
    <property type="entry name" value="GLYCO_HORMONE_BETA_1"/>
    <property type="match status" value="1"/>
</dbReference>
<dbReference type="PROSITE" id="PS00689">
    <property type="entry name" value="GLYCO_HORMONE_BETA_2"/>
    <property type="match status" value="1"/>
</dbReference>
<reference key="1">
    <citation type="journal article" date="2008" name="Mol. Hum. Reprod.">
        <title>Fine-scale quantification of HCG beta gene transcription in human trophoblastic and non-malignant non-trophoblastic tissues.</title>
        <authorList>
            <person name="Rull K."/>
            <person name="Hallast P."/>
            <person name="Uuskula L."/>
            <person name="Jackson J."/>
            <person name="Punab M."/>
            <person name="Salumets A."/>
            <person name="Campbell R.K."/>
            <person name="Laan M."/>
        </authorList>
    </citation>
    <scope>NUCLEOTIDE SEQUENCE [MRNA]</scope>
    <scope>TISSUE SPECIFICITY</scope>
</reference>
<reference key="2">
    <citation type="journal article" date="2004" name="Nature">
        <title>The DNA sequence and biology of human chromosome 19.</title>
        <authorList>
            <person name="Grimwood J."/>
            <person name="Gordon L.A."/>
            <person name="Olsen A.S."/>
            <person name="Terry A."/>
            <person name="Schmutz J."/>
            <person name="Lamerdin J.E."/>
            <person name="Hellsten U."/>
            <person name="Goodstein D."/>
            <person name="Couronne O."/>
            <person name="Tran-Gyamfi M."/>
            <person name="Aerts A."/>
            <person name="Altherr M."/>
            <person name="Ashworth L."/>
            <person name="Bajorek E."/>
            <person name="Black S."/>
            <person name="Branscomb E."/>
            <person name="Caenepeel S."/>
            <person name="Carrano A.V."/>
            <person name="Caoile C."/>
            <person name="Chan Y.M."/>
            <person name="Christensen M."/>
            <person name="Cleland C.A."/>
            <person name="Copeland A."/>
            <person name="Dalin E."/>
            <person name="Dehal P."/>
            <person name="Denys M."/>
            <person name="Detter J.C."/>
            <person name="Escobar J."/>
            <person name="Flowers D."/>
            <person name="Fotopulos D."/>
            <person name="Garcia C."/>
            <person name="Georgescu A.M."/>
            <person name="Glavina T."/>
            <person name="Gomez M."/>
            <person name="Gonzales E."/>
            <person name="Groza M."/>
            <person name="Hammon N."/>
            <person name="Hawkins T."/>
            <person name="Haydu L."/>
            <person name="Ho I."/>
            <person name="Huang W."/>
            <person name="Israni S."/>
            <person name="Jett J."/>
            <person name="Kadner K."/>
            <person name="Kimball H."/>
            <person name="Kobayashi A."/>
            <person name="Larionov V."/>
            <person name="Leem S.-H."/>
            <person name="Lopez F."/>
            <person name="Lou Y."/>
            <person name="Lowry S."/>
            <person name="Malfatti S."/>
            <person name="Martinez D."/>
            <person name="McCready P.M."/>
            <person name="Medina C."/>
            <person name="Morgan J."/>
            <person name="Nelson K."/>
            <person name="Nolan M."/>
            <person name="Ovcharenko I."/>
            <person name="Pitluck S."/>
            <person name="Pollard M."/>
            <person name="Popkie A.P."/>
            <person name="Predki P."/>
            <person name="Quan G."/>
            <person name="Ramirez L."/>
            <person name="Rash S."/>
            <person name="Retterer J."/>
            <person name="Rodriguez A."/>
            <person name="Rogers S."/>
            <person name="Salamov A."/>
            <person name="Salazar A."/>
            <person name="She X."/>
            <person name="Smith D."/>
            <person name="Slezak T."/>
            <person name="Solovyev V."/>
            <person name="Thayer N."/>
            <person name="Tice H."/>
            <person name="Tsai M."/>
            <person name="Ustaszewska A."/>
            <person name="Vo N."/>
            <person name="Wagner M."/>
            <person name="Wheeler J."/>
            <person name="Wu K."/>
            <person name="Xie G."/>
            <person name="Yang J."/>
            <person name="Dubchak I."/>
            <person name="Furey T.S."/>
            <person name="DeJong P."/>
            <person name="Dickson M."/>
            <person name="Gordon D."/>
            <person name="Eichler E.E."/>
            <person name="Pennacchio L.A."/>
            <person name="Richardson P."/>
            <person name="Stubbs L."/>
            <person name="Rokhsar D.S."/>
            <person name="Myers R.M."/>
            <person name="Rubin E.M."/>
            <person name="Lucas S.M."/>
        </authorList>
    </citation>
    <scope>NUCLEOTIDE SEQUENCE [LARGE SCALE GENOMIC DNA]</scope>
</reference>
<reference key="3">
    <citation type="journal article" date="2004" name="Genome Res.">
        <title>The status, quality, and expansion of the NIH full-length cDNA project: the Mammalian Gene Collection (MGC).</title>
        <authorList>
            <consortium name="The MGC Project Team"/>
        </authorList>
    </citation>
    <scope>NUCLEOTIDE SEQUENCE [LARGE SCALE MRNA]</scope>
</reference>
<reference key="4">
    <citation type="journal article" date="2002" name="Mol. Biol. Evol.">
        <title>Chorionic gonadotropin has a recent origin within primates and an evolutionary history of selection.</title>
        <authorList>
            <person name="Maston G.A."/>
            <person name="Ruvolo M."/>
        </authorList>
    </citation>
    <scope>MISCELLANEOUS</scope>
</reference>
<reference key="5">
    <citation type="journal article" date="2005" name="Hum. Reprod.">
        <title>Expression of beta-subunit of HCG genes during normal and failed pregnancy.</title>
        <authorList>
            <person name="Rull K."/>
            <person name="Laan M."/>
        </authorList>
    </citation>
    <scope>TISSUE SPECIFICITY</scope>
</reference>
<name>CGB2_HUMAN</name>
<organism>
    <name type="scientific">Homo sapiens</name>
    <name type="common">Human</name>
    <dbReference type="NCBI Taxonomy" id="9606"/>
    <lineage>
        <taxon>Eukaryota</taxon>
        <taxon>Metazoa</taxon>
        <taxon>Chordata</taxon>
        <taxon>Craniata</taxon>
        <taxon>Vertebrata</taxon>
        <taxon>Euteleostomi</taxon>
        <taxon>Mammalia</taxon>
        <taxon>Eutheria</taxon>
        <taxon>Euarchontoglires</taxon>
        <taxon>Primates</taxon>
        <taxon>Haplorrhini</taxon>
        <taxon>Catarrhini</taxon>
        <taxon>Hominidae</taxon>
        <taxon>Homo</taxon>
    </lineage>
</organism>
<comment type="subcellular location">
    <subcellularLocation>
        <location>Secreted</location>
    </subcellularLocation>
</comment>
<comment type="tissue specificity">
    <text evidence="5 6">Expressed in placenta, testis and pituitary.</text>
</comment>
<comment type="miscellaneous">
    <text evidence="4">Encoded by a cluster of genes that have evolved by duplication from LHB. HCG-beta is encoded by six non-allelic genes (CGB) clustered on chromosome 19q13.3 and named CGB1, CGB2, CGB3, CGB5, CGB7 and CGB8. Two specific hCGb proteins that differ by three amino acids in positions 2,4 and 117 have been described: type 1 (CGB7) and type 2 (CGB3, CGB5, CGB8). The CGB gene first arose in the common ancestor of the anthropoid primates.</text>
</comment>
<comment type="similarity">
    <text evidence="7">Belongs to the glycoprotein hormones subunit beta family.</text>
</comment>
<comment type="sequence caution" evidence="7">
    <conflict type="erroneous translation">
        <sequence resource="EMBL-CDS" id="AAH69367"/>
    </conflict>
    <text>Wrong choice of frame.</text>
</comment>
<feature type="signal peptide" evidence="2">
    <location>
        <begin position="1"/>
        <end position="18"/>
    </location>
</feature>
<feature type="chain" id="PRO_0000342549" description="Choriogonadotropin subunit beta variant 2" evidence="2">
    <location>
        <begin position="19"/>
        <end position="163"/>
    </location>
</feature>
<feature type="region of interest" description="Disordered" evidence="3">
    <location>
        <begin position="129"/>
        <end position="163"/>
    </location>
</feature>
<feature type="compositionally biased region" description="Pro residues" evidence="3">
    <location>
        <begin position="141"/>
        <end position="152"/>
    </location>
</feature>
<feature type="glycosylation site" description="N-linked (GlcNAc...) asparagine" evidence="2">
    <location>
        <position position="31"/>
    </location>
</feature>
<feature type="glycosylation site" description="N-linked (GlcNAc...) asparagine" evidence="2">
    <location>
        <position position="48"/>
    </location>
</feature>
<feature type="disulfide bond" evidence="1">
    <location>
        <begin position="27"/>
        <end position="75"/>
    </location>
</feature>
<feature type="disulfide bond" evidence="1">
    <location>
        <begin position="41"/>
        <end position="90"/>
    </location>
</feature>
<feature type="disulfide bond" evidence="1">
    <location>
        <begin position="44"/>
        <end position="128"/>
    </location>
</feature>
<feature type="disulfide bond" evidence="1">
    <location>
        <begin position="52"/>
        <end position="106"/>
    </location>
</feature>
<feature type="disulfide bond" evidence="1">
    <location>
        <begin position="56"/>
        <end position="108"/>
    </location>
</feature>
<feature type="disulfide bond" evidence="1">
    <location>
        <begin position="111"/>
        <end position="118"/>
    </location>
</feature>
<gene>
    <name type="primary">CGB2</name>
</gene>